<evidence type="ECO:0000255" key="1">
    <source>
        <dbReference type="PROSITE-ProRule" id="PRU00840"/>
    </source>
</evidence>
<evidence type="ECO:0000256" key="2">
    <source>
        <dbReference type="SAM" id="MobiDB-lite"/>
    </source>
</evidence>
<evidence type="ECO:0000269" key="3">
    <source>
    </source>
</evidence>
<evidence type="ECO:0000269" key="4">
    <source>
    </source>
</evidence>
<evidence type="ECO:0000269" key="5">
    <source>
    </source>
</evidence>
<evidence type="ECO:0000269" key="6">
    <source>
    </source>
</evidence>
<evidence type="ECO:0000269" key="7">
    <source>
    </source>
</evidence>
<evidence type="ECO:0000269" key="8">
    <source>
    </source>
</evidence>
<evidence type="ECO:0007829" key="9">
    <source>
        <dbReference type="PDB" id="4P55"/>
    </source>
</evidence>
<feature type="chain" id="PRO_0000423774" description="Viral IRF2-like protein">
    <location>
        <begin position="1"/>
        <end position="680"/>
    </location>
</feature>
<feature type="DNA-binding region" description="IRF tryptophan pentad repeat" evidence="1">
    <location>
        <begin position="7"/>
        <end position="103"/>
    </location>
</feature>
<feature type="region of interest" description="Disordered" evidence="2">
    <location>
        <begin position="156"/>
        <end position="201"/>
    </location>
</feature>
<feature type="region of interest" description="Disordered" evidence="2">
    <location>
        <begin position="220"/>
        <end position="257"/>
    </location>
</feature>
<feature type="region of interest" description="Disordered" evidence="2">
    <location>
        <begin position="343"/>
        <end position="365"/>
    </location>
</feature>
<feature type="region of interest" description="Disordered" evidence="2">
    <location>
        <begin position="403"/>
        <end position="423"/>
    </location>
</feature>
<feature type="compositionally biased region" description="Low complexity" evidence="2">
    <location>
        <begin position="168"/>
        <end position="188"/>
    </location>
</feature>
<feature type="compositionally biased region" description="Acidic residues" evidence="2">
    <location>
        <begin position="191"/>
        <end position="200"/>
    </location>
</feature>
<feature type="compositionally biased region" description="Low complexity" evidence="2">
    <location>
        <begin position="220"/>
        <end position="240"/>
    </location>
</feature>
<feature type="mutagenesis site" description="About 50% loss of transcriptional regulation and DNA-binding." evidence="5">
    <original>R</original>
    <variation>A</variation>
    <location>
        <position position="82"/>
    </location>
</feature>
<feature type="mutagenesis site" description="About 50% loss of transcriptional regulation and DNA-binding." evidence="5">
    <original>R</original>
    <variation>A</variation>
    <location>
        <position position="85"/>
    </location>
</feature>
<feature type="helix" evidence="9">
    <location>
        <begin position="8"/>
        <end position="20"/>
    </location>
</feature>
<feature type="strand" evidence="9">
    <location>
        <begin position="28"/>
        <end position="30"/>
    </location>
</feature>
<feature type="turn" evidence="9">
    <location>
        <begin position="31"/>
        <end position="34"/>
    </location>
</feature>
<feature type="strand" evidence="9">
    <location>
        <begin position="35"/>
        <end position="39"/>
    </location>
</feature>
<feature type="strand" evidence="9">
    <location>
        <begin position="41"/>
        <end position="43"/>
    </location>
</feature>
<feature type="helix" evidence="9">
    <location>
        <begin position="54"/>
        <end position="64"/>
    </location>
</feature>
<feature type="helix" evidence="9">
    <location>
        <begin position="76"/>
        <end position="86"/>
    </location>
</feature>
<feature type="strand" evidence="9">
    <location>
        <begin position="89"/>
        <end position="91"/>
    </location>
</feature>
<feature type="strand" evidence="9">
    <location>
        <begin position="96"/>
        <end position="100"/>
    </location>
</feature>
<feature type="strand" evidence="9">
    <location>
        <begin position="103"/>
        <end position="110"/>
    </location>
</feature>
<proteinExistence type="evidence at protein level"/>
<organism>
    <name type="scientific">Human herpesvirus 8 type P (isolate GK18)</name>
    <name type="common">HHV-8</name>
    <name type="synonym">Kaposi's sarcoma-associated herpesvirus</name>
    <dbReference type="NCBI Taxonomy" id="868565"/>
    <lineage>
        <taxon>Viruses</taxon>
        <taxon>Duplodnaviria</taxon>
        <taxon>Heunggongvirae</taxon>
        <taxon>Peploviricota</taxon>
        <taxon>Herviviricetes</taxon>
        <taxon>Herpesvirales</taxon>
        <taxon>Orthoherpesviridae</taxon>
        <taxon>Gammaherpesvirinae</taxon>
        <taxon>Rhadinovirus</taxon>
        <taxon>Rhadinovirus humangamma8</taxon>
        <taxon>Human herpesvirus 8</taxon>
    </lineage>
</organism>
<protein>
    <recommendedName>
        <fullName>Viral IRF2-like protein</fullName>
        <shortName>vIRF-2</shortName>
    </recommendedName>
</protein>
<organismHost>
    <name type="scientific">Homo sapiens</name>
    <name type="common">Human</name>
    <dbReference type="NCBI Taxonomy" id="9606"/>
</organismHost>
<reference key="1">
    <citation type="journal article" date="1999" name="J. Virol.">
        <title>Identification of a spliced gene from Kaposi's sarcoma-associated herpesvirus encoding a protein with similarities to latent membrane proteins 1 and 2A of Epstein-Barr virus.</title>
        <authorList>
            <person name="Glenn M."/>
            <person name="Rainbow L."/>
            <person name="Aurade F."/>
            <person name="Davison A."/>
            <person name="Schulz T.F."/>
        </authorList>
    </citation>
    <scope>NUCLEOTIDE SEQUENCE [LARGE SCALE GENOMIC DNA]</scope>
</reference>
<reference key="2">
    <citation type="journal article" date="2006" name="J. Gen. Virol.">
        <title>Kaposi's sarcoma-associated herpesvirus immune modulation: an overview.</title>
        <authorList>
            <person name="Rezaee S.A.R."/>
            <person name="Cunningham C."/>
            <person name="Davison A.J."/>
            <person name="Blackbourn D.J."/>
        </authorList>
    </citation>
    <scope>NUCLEOTIDE SEQUENCE [LARGE SCALE GENOMIC DNA]</scope>
</reference>
<reference key="3">
    <citation type="journal article" date="2001" name="J. Virol.">
        <title>Latently expressed human herpesvirus 8-encoded interferon regulatory factor 2 inhibits double-stranded RNA-activated protein kinase.</title>
        <authorList>
            <person name="Burysek L."/>
            <person name="Pitha P.M."/>
        </authorList>
    </citation>
    <scope>FUNCTION</scope>
    <scope>SUBCELLULAR LOCATION</scope>
    <scope>INTERACTION WITH HOST EI2FAK2</scope>
</reference>
<reference key="4">
    <citation type="journal article" date="2011" name="J. Gen. Virol.">
        <title>Kaposi's sarcoma-associated herpesvirus viral interferon regulatory factor-2 inhibits type 1 interferon signalling by targeting interferon-stimulated gene factor-3.</title>
        <authorList>
            <person name="Mutocheluh M."/>
            <person name="Hindle L."/>
            <person name="Areste C."/>
            <person name="Chanas S.A."/>
            <person name="Butler L.M."/>
            <person name="Lowry K."/>
            <person name="Shah K."/>
            <person name="Evans D.J."/>
            <person name="Blackbourn D.J."/>
        </authorList>
    </citation>
    <scope>FUNCTION</scope>
</reference>
<reference key="5">
    <citation type="journal article" date="2016" name="J. Virol.">
        <title>Genome-Wide Mapping of the Binding Sites and Structural Analysis of Kaposi's Sarcoma-Associated Herpesvirus Viral Interferon Regulatory Factor 2 Reveal that It Is a DNA-Binding Transcription Factor.</title>
        <authorList>
            <person name="Hu H."/>
            <person name="Dong J."/>
            <person name="Liang D."/>
            <person name="Gao Z."/>
            <person name="Bai L."/>
            <person name="Sun R."/>
            <person name="Hu H."/>
            <person name="Zhang H."/>
            <person name="Dong Y."/>
            <person name="Lan K."/>
        </authorList>
    </citation>
    <scope>FUNCTION</scope>
    <scope>MUTAGENESIS OF ARG-82 AND ARG-85</scope>
    <scope>DNA-BINDING</scope>
</reference>
<reference key="6">
    <citation type="journal article" date="2016" name="Biochem. Biophys. Res. Commun.">
        <title>Activation of the phosphatidylinositol 3-kinase/Akt pathway by viral interferon regulatory factor 2 of Kaposi's sarcoma-associated herpesvirus.</title>
        <authorList>
            <person name="Kim Y."/>
            <person name="Cha S."/>
            <person name="Seo T."/>
        </authorList>
    </citation>
    <scope>FUNCTION</scope>
    <scope>SUBCELLULAR LOCATION</scope>
</reference>
<reference key="7">
    <citation type="journal article" date="2019" name="PLoS Pathog.">
        <title>Kaposi's sarcoma-associated herpesvirus vIRF2 protein utilizes an IFN-dependent pathway to regulate viral early gene expression.</title>
        <authorList>
            <person name="Koch S."/>
            <person name="Damas M."/>
            <person name="Freise A."/>
            <person name="Hage E."/>
            <person name="Dhingra A."/>
            <person name="Rueckert J."/>
            <person name="Gallo A."/>
            <person name="Kremmer E."/>
            <person name="Tegge W."/>
            <person name="Broenstrup M."/>
            <person name="Brune W."/>
            <person name="Schulz T.F."/>
        </authorList>
    </citation>
    <scope>FUNCTION</scope>
    <scope>SUBCELLULAR LOCATION</scope>
</reference>
<reference key="8">
    <citation type="journal article" date="2020" name="J. Virol.">
        <title>USP7-Dependent Regulation of TRAF Activation and Signaling by a Viral Interferon Regulatory Factor Homologue.</title>
        <authorList>
            <person name="Xiang Q."/>
            <person name="Ju H."/>
            <person name="Nicholas J."/>
        </authorList>
    </citation>
    <scope>FUNCTION</scope>
    <scope>INTERACTION WITH USP7</scope>
</reference>
<dbReference type="EMBL" id="AF148805">
    <property type="protein sequence ID" value="ABD28912.1"/>
    <property type="molecule type" value="Genomic_DNA"/>
</dbReference>
<dbReference type="RefSeq" id="YP_001129414.1">
    <property type="nucleotide sequence ID" value="NC_009333.1"/>
</dbReference>
<dbReference type="PDB" id="4P55">
    <property type="method" value="X-ray"/>
    <property type="resolution" value="2.50 A"/>
    <property type="chains" value="A/B=7-114"/>
</dbReference>
<dbReference type="PDBsum" id="4P55"/>
<dbReference type="SMR" id="Q2HR71"/>
<dbReference type="BioGRID" id="1776994">
    <property type="interactions" value="3"/>
</dbReference>
<dbReference type="IntAct" id="Q2HR71">
    <property type="interactions" value="1"/>
</dbReference>
<dbReference type="DNASU" id="4961491"/>
<dbReference type="GeneID" id="4961491"/>
<dbReference type="KEGG" id="vg:4961491"/>
<dbReference type="EvolutionaryTrace" id="Q2HR71"/>
<dbReference type="Proteomes" id="UP000000942">
    <property type="component" value="Segment"/>
</dbReference>
<dbReference type="GO" id="GO:0030430">
    <property type="term" value="C:host cell cytoplasm"/>
    <property type="evidence" value="ECO:0007669"/>
    <property type="project" value="UniProtKB-SubCell"/>
</dbReference>
<dbReference type="GO" id="GO:0042025">
    <property type="term" value="C:host cell nucleus"/>
    <property type="evidence" value="ECO:0007669"/>
    <property type="project" value="UniProtKB-SubCell"/>
</dbReference>
<dbReference type="GO" id="GO:0030291">
    <property type="term" value="F:protein serine/threonine kinase inhibitor activity"/>
    <property type="evidence" value="ECO:0007669"/>
    <property type="project" value="UniProtKB-KW"/>
</dbReference>
<dbReference type="GO" id="GO:0000976">
    <property type="term" value="F:transcription cis-regulatory region binding"/>
    <property type="evidence" value="ECO:0007669"/>
    <property type="project" value="InterPro"/>
</dbReference>
<dbReference type="GO" id="GO:0052150">
    <property type="term" value="P:symbiont-mediated perturbation of host apoptosis"/>
    <property type="evidence" value="ECO:0007669"/>
    <property type="project" value="UniProtKB-KW"/>
</dbReference>
<dbReference type="GO" id="GO:0039548">
    <property type="term" value="P:symbiont-mediated suppression of host cytoplasmic pattern recognition receptor signaling pathway via inhibition of IRF3 activity"/>
    <property type="evidence" value="ECO:0007669"/>
    <property type="project" value="UniProtKB-KW"/>
</dbReference>
<dbReference type="GO" id="GO:0039580">
    <property type="term" value="P:symbiont-mediated suppression of host PKR/eIFalpha signaling"/>
    <property type="evidence" value="ECO:0007669"/>
    <property type="project" value="UniProtKB-KW"/>
</dbReference>
<dbReference type="GO" id="GO:0039502">
    <property type="term" value="P:symbiont-mediated suppression of host type I interferon-mediated signaling pathway"/>
    <property type="evidence" value="ECO:0007669"/>
    <property type="project" value="UniProtKB-KW"/>
</dbReference>
<dbReference type="Gene3D" id="1.10.10.10">
    <property type="entry name" value="Winged helix-like DNA-binding domain superfamily/Winged helix DNA-binding domain"/>
    <property type="match status" value="1"/>
</dbReference>
<dbReference type="InterPro" id="IPR001346">
    <property type="entry name" value="Interferon_reg_fact_DNA-bd_dom"/>
</dbReference>
<dbReference type="InterPro" id="IPR036388">
    <property type="entry name" value="WH-like_DNA-bd_sf"/>
</dbReference>
<dbReference type="InterPro" id="IPR036390">
    <property type="entry name" value="WH_DNA-bd_sf"/>
</dbReference>
<dbReference type="SUPFAM" id="SSF46785">
    <property type="entry name" value="Winged helix' DNA-binding domain"/>
    <property type="match status" value="1"/>
</dbReference>
<dbReference type="PROSITE" id="PS51507">
    <property type="entry name" value="IRF_2"/>
    <property type="match status" value="1"/>
</dbReference>
<name>VIRF2_HHV8P</name>
<keyword id="KW-0002">3D-structure</keyword>
<keyword id="KW-0238">DNA-binding</keyword>
<keyword id="KW-1035">Host cytoplasm</keyword>
<keyword id="KW-1048">Host nucleus</keyword>
<keyword id="KW-0945">Host-virus interaction</keyword>
<keyword id="KW-1090">Inhibition of host innate immune response by virus</keyword>
<keyword id="KW-1114">Inhibition of host interferon signaling pathway by virus</keyword>
<keyword id="KW-1092">Inhibition of host IRF3 by virus</keyword>
<keyword id="KW-1102">Inhibition of host PKR by virus</keyword>
<keyword id="KW-1113">Inhibition of host RLR pathway by virus</keyword>
<keyword id="KW-0922">Interferon antiviral system evasion</keyword>
<keyword id="KW-1119">Modulation of host cell apoptosis by virus</keyword>
<keyword id="KW-1185">Reference proteome</keyword>
<keyword id="KW-0804">Transcription</keyword>
<keyword id="KW-0805">Transcription regulation</keyword>
<keyword id="KW-0899">Viral immunoevasion</keyword>
<accession>Q2HR71</accession>
<accession>D0UZS4</accession>
<comment type="function">
    <text evidence="3 4 5 6 7 8">DNA-binding transcription factor that plays a role in the modulation of host immune response (PubMed:26537687, PubMed:31059555). Acts by interacting with host EIF2AK2/PKR and inhibiting its activation. In turn, EIF2AK2/PKR substrates including EIF2S1 or histone H2A are not phosphorylated (PubMed:11160738). Inhibits type I interferon signaling by targeting host IRF3 during viral reactivation from latency (PubMed:11160738, PubMed:21697347). Attenuates the transcriptional activity of host FOXO3 via activation of the AKT1 signaling pathway, inhibiting FOXO3-mediated apoptosis (PubMed:26797279). Also suppresses the expression of viral early lytic genes in both newly infected and reactivated infected host cells allowing regulation of viral life cycle by harnessing the interferon pathway. Mechanistically, promotes host PML bodies formation as well as host antiviral restriction factors IFIT1-3 expression leading to inhibition of viral early lytic proteins (PubMed:31059555). Also regulates host TRAF3 and TRAF6 ubiquitination by interacting with USP7 deubiquitinase thereby influencing TRAF3/6-mediated signal transduction (PubMed:31666375).</text>
</comment>
<comment type="subunit">
    <text evidence="3 8">Interacts with host EIF2AK2/PKR (PubMed:11160738). Interacts with host USP7 (PubMed:31666375).</text>
</comment>
<comment type="interaction">
    <interactant intactId="EBI-8876177">
        <id>Q2HR71</id>
    </interactant>
    <interactant intactId="EBI-640775">
        <id>P19525</id>
        <label>EIF2AK2</label>
    </interactant>
    <organismsDiffer>true</organismsDiffer>
    <experiments>2</experiments>
</comment>
<comment type="subcellular location">
    <subcellularLocation>
        <location evidence="3 6 7">Host nucleus</location>
    </subcellularLocation>
    <subcellularLocation>
        <location evidence="6">Host cytoplasm</location>
    </subcellularLocation>
</comment>
<comment type="similarity">
    <text evidence="1">Belongs to the IRF family.</text>
</comment>
<gene>
    <name type="primary">vIRF-2</name>
</gene>
<sequence length="680" mass="75090">MPRYTESEWLTDFIIDALDSGRFWGVGWLDEQKRIFTVPGRNRRERMPEGFDDFYEAFLEERRRHGLPEIPETETGLGCFGRLLRTANRARQERPFTIYKGKMKLNRWIMTPRPYKGCEGCLVYLTQEPAMKNMLKALFGIYPHDDKHREKALRRSLRKKAQREAARKQAAAVATPTTSSAAEVSSRSQSEDTESSDSENELWVGAQGFVGRDMHSLFFEEPEPSGFGSSGQSSSLLAPDSPRPSTSQVQGPLHVHTPTDLCLPTGGLPSPVIFPHETQGLLAPPAGQSQTPFSPEGPVPSHVSGLDDCLPMVDHIEGCLLDLLSDVGQELPDLGDLGELLCETASPQGPMQSEGGEEGSTESVSVLPATHPLESSAPGASVMGSGQELPDLGDLSELLCETASPQGPMQSEGGEEGSTESVSVLPATHPLESSAPGASVMGSSFQASDNVDDFIDCIPPLCRDDRDVEDQEKADQTFYWYGSDMRPKVLTATQSVAAYLSKKQAIYKVGDKLVPLVVEVYYFGEKVKTHFDLTGGIVICSQVPEASPEHICQTVPPYKCLLPRTAHCSVDANRTLEQTLDRFSMGVVAIGTNMGIFLKGLLEYPAYFVGNASRRRIGKCRPLSHRHEIQQAFDVERHNREPEGSRYASLFLGRRPSPEYDWDHYPVILHIYLAPFYHRD</sequence>